<accession>Q98F60</accession>
<evidence type="ECO:0000255" key="1">
    <source>
        <dbReference type="HAMAP-Rule" id="MF_00141"/>
    </source>
</evidence>
<sequence>MAKINGNEIRPGYVIEHDGGLWVAVRTNTVKPGKGGAYNQVELKNLINGTKLNERFRSAETVEQIRLDLKDFSFLYEQDDALVFMDTQSYEQLELNKDFVGDRAAFLQDGMMVTVQLYEERPIGISLPDQVTLTITEADPVVKGQTAAASYKPAVLKNGIRVLVPPFIGAGERIIVDTNEITYVRRAD</sequence>
<gene>
    <name evidence="1" type="primary">efp1</name>
    <name type="ordered locus">mlr3919</name>
</gene>
<comment type="function">
    <text evidence="1">Involved in peptide bond synthesis. Stimulates efficient translation and peptide-bond synthesis on native or reconstituted 70S ribosomes in vitro. Probably functions indirectly by altering the affinity of the ribosome for aminoacyl-tRNA, thus increasing their reactivity as acceptors for peptidyl transferase.</text>
</comment>
<comment type="pathway">
    <text evidence="1">Protein biosynthesis; polypeptide chain elongation.</text>
</comment>
<comment type="subcellular location">
    <subcellularLocation>
        <location evidence="1">Cytoplasm</location>
    </subcellularLocation>
</comment>
<comment type="similarity">
    <text evidence="1">Belongs to the elongation factor P family.</text>
</comment>
<feature type="chain" id="PRO_0000094314" description="Elongation factor P 1">
    <location>
        <begin position="1"/>
        <end position="188"/>
    </location>
</feature>
<protein>
    <recommendedName>
        <fullName evidence="1">Elongation factor P 1</fullName>
        <shortName evidence="1">EF-P 1</shortName>
    </recommendedName>
</protein>
<keyword id="KW-0963">Cytoplasm</keyword>
<keyword id="KW-0251">Elongation factor</keyword>
<keyword id="KW-0648">Protein biosynthesis</keyword>
<dbReference type="EMBL" id="BA000012">
    <property type="protein sequence ID" value="BAB50707.1"/>
    <property type="molecule type" value="Genomic_DNA"/>
</dbReference>
<dbReference type="RefSeq" id="WP_010912050.1">
    <property type="nucleotide sequence ID" value="NC_002678.2"/>
</dbReference>
<dbReference type="SMR" id="Q98F60"/>
<dbReference type="KEGG" id="mlo:mlr3919"/>
<dbReference type="PATRIC" id="fig|266835.9.peg.3117"/>
<dbReference type="eggNOG" id="COG0231">
    <property type="taxonomic scope" value="Bacteria"/>
</dbReference>
<dbReference type="HOGENOM" id="CLU_074944_1_1_5"/>
<dbReference type="UniPathway" id="UPA00345"/>
<dbReference type="Proteomes" id="UP000000552">
    <property type="component" value="Chromosome"/>
</dbReference>
<dbReference type="GO" id="GO:0005737">
    <property type="term" value="C:cytoplasm"/>
    <property type="evidence" value="ECO:0007669"/>
    <property type="project" value="UniProtKB-SubCell"/>
</dbReference>
<dbReference type="GO" id="GO:0003746">
    <property type="term" value="F:translation elongation factor activity"/>
    <property type="evidence" value="ECO:0007669"/>
    <property type="project" value="UniProtKB-UniRule"/>
</dbReference>
<dbReference type="GO" id="GO:0043043">
    <property type="term" value="P:peptide biosynthetic process"/>
    <property type="evidence" value="ECO:0007669"/>
    <property type="project" value="InterPro"/>
</dbReference>
<dbReference type="CDD" id="cd04470">
    <property type="entry name" value="S1_EF-P_repeat_1"/>
    <property type="match status" value="1"/>
</dbReference>
<dbReference type="CDD" id="cd05794">
    <property type="entry name" value="S1_EF-P_repeat_2"/>
    <property type="match status" value="1"/>
</dbReference>
<dbReference type="FunFam" id="2.30.30.30:FF:000003">
    <property type="entry name" value="Elongation factor P"/>
    <property type="match status" value="1"/>
</dbReference>
<dbReference type="FunFam" id="2.40.50.140:FF:000004">
    <property type="entry name" value="Elongation factor P"/>
    <property type="match status" value="1"/>
</dbReference>
<dbReference type="FunFam" id="2.40.50.140:FF:000009">
    <property type="entry name" value="Elongation factor P"/>
    <property type="match status" value="1"/>
</dbReference>
<dbReference type="Gene3D" id="2.30.30.30">
    <property type="match status" value="1"/>
</dbReference>
<dbReference type="Gene3D" id="2.40.50.140">
    <property type="entry name" value="Nucleic acid-binding proteins"/>
    <property type="match status" value="2"/>
</dbReference>
<dbReference type="HAMAP" id="MF_00141">
    <property type="entry name" value="EF_P"/>
    <property type="match status" value="1"/>
</dbReference>
<dbReference type="InterPro" id="IPR015365">
    <property type="entry name" value="Elong-fact-P_C"/>
</dbReference>
<dbReference type="InterPro" id="IPR012340">
    <property type="entry name" value="NA-bd_OB-fold"/>
</dbReference>
<dbReference type="InterPro" id="IPR014722">
    <property type="entry name" value="Rib_uL2_dom2"/>
</dbReference>
<dbReference type="InterPro" id="IPR020599">
    <property type="entry name" value="Transl_elong_fac_P/YeiP"/>
</dbReference>
<dbReference type="InterPro" id="IPR013185">
    <property type="entry name" value="Transl_elong_KOW-like"/>
</dbReference>
<dbReference type="InterPro" id="IPR001059">
    <property type="entry name" value="Transl_elong_P/YeiP_cen"/>
</dbReference>
<dbReference type="InterPro" id="IPR013852">
    <property type="entry name" value="Transl_elong_P/YeiP_CS"/>
</dbReference>
<dbReference type="InterPro" id="IPR011768">
    <property type="entry name" value="Transl_elongation_fac_P"/>
</dbReference>
<dbReference type="InterPro" id="IPR008991">
    <property type="entry name" value="Translation_prot_SH3-like_sf"/>
</dbReference>
<dbReference type="NCBIfam" id="TIGR00038">
    <property type="entry name" value="efp"/>
    <property type="match status" value="1"/>
</dbReference>
<dbReference type="NCBIfam" id="NF001810">
    <property type="entry name" value="PRK00529.1"/>
    <property type="match status" value="1"/>
</dbReference>
<dbReference type="PANTHER" id="PTHR30053">
    <property type="entry name" value="ELONGATION FACTOR P"/>
    <property type="match status" value="1"/>
</dbReference>
<dbReference type="PANTHER" id="PTHR30053:SF14">
    <property type="entry name" value="TRANSLATION ELONGATION FACTOR KOW-LIKE DOMAIN-CONTAINING PROTEIN"/>
    <property type="match status" value="1"/>
</dbReference>
<dbReference type="Pfam" id="PF01132">
    <property type="entry name" value="EFP"/>
    <property type="match status" value="1"/>
</dbReference>
<dbReference type="Pfam" id="PF08207">
    <property type="entry name" value="EFP_N"/>
    <property type="match status" value="1"/>
</dbReference>
<dbReference type="Pfam" id="PF09285">
    <property type="entry name" value="Elong-fact-P_C"/>
    <property type="match status" value="1"/>
</dbReference>
<dbReference type="PIRSF" id="PIRSF005901">
    <property type="entry name" value="EF-P"/>
    <property type="match status" value="1"/>
</dbReference>
<dbReference type="SMART" id="SM01185">
    <property type="entry name" value="EFP"/>
    <property type="match status" value="1"/>
</dbReference>
<dbReference type="SMART" id="SM00841">
    <property type="entry name" value="Elong-fact-P_C"/>
    <property type="match status" value="1"/>
</dbReference>
<dbReference type="SUPFAM" id="SSF50249">
    <property type="entry name" value="Nucleic acid-binding proteins"/>
    <property type="match status" value="2"/>
</dbReference>
<dbReference type="SUPFAM" id="SSF50104">
    <property type="entry name" value="Translation proteins SH3-like domain"/>
    <property type="match status" value="1"/>
</dbReference>
<dbReference type="PROSITE" id="PS01275">
    <property type="entry name" value="EFP"/>
    <property type="match status" value="1"/>
</dbReference>
<name>EFP1_RHILO</name>
<organism>
    <name type="scientific">Mesorhizobium japonicum (strain LMG 29417 / CECT 9101 / MAFF 303099)</name>
    <name type="common">Mesorhizobium loti (strain MAFF 303099)</name>
    <dbReference type="NCBI Taxonomy" id="266835"/>
    <lineage>
        <taxon>Bacteria</taxon>
        <taxon>Pseudomonadati</taxon>
        <taxon>Pseudomonadota</taxon>
        <taxon>Alphaproteobacteria</taxon>
        <taxon>Hyphomicrobiales</taxon>
        <taxon>Phyllobacteriaceae</taxon>
        <taxon>Mesorhizobium</taxon>
    </lineage>
</organism>
<proteinExistence type="inferred from homology"/>
<reference key="1">
    <citation type="journal article" date="2000" name="DNA Res.">
        <title>Complete genome structure of the nitrogen-fixing symbiotic bacterium Mesorhizobium loti.</title>
        <authorList>
            <person name="Kaneko T."/>
            <person name="Nakamura Y."/>
            <person name="Sato S."/>
            <person name="Asamizu E."/>
            <person name="Kato T."/>
            <person name="Sasamoto S."/>
            <person name="Watanabe A."/>
            <person name="Idesawa K."/>
            <person name="Ishikawa A."/>
            <person name="Kawashima K."/>
            <person name="Kimura T."/>
            <person name="Kishida Y."/>
            <person name="Kiyokawa C."/>
            <person name="Kohara M."/>
            <person name="Matsumoto M."/>
            <person name="Matsuno A."/>
            <person name="Mochizuki Y."/>
            <person name="Nakayama S."/>
            <person name="Nakazaki N."/>
            <person name="Shimpo S."/>
            <person name="Sugimoto M."/>
            <person name="Takeuchi C."/>
            <person name="Yamada M."/>
            <person name="Tabata S."/>
        </authorList>
    </citation>
    <scope>NUCLEOTIDE SEQUENCE [LARGE SCALE GENOMIC DNA]</scope>
    <source>
        <strain>LMG 29417 / CECT 9101 / MAFF 303099</strain>
    </source>
</reference>